<accession>Q1C1V3</accession>
<evidence type="ECO:0000255" key="1">
    <source>
        <dbReference type="HAMAP-Rule" id="MF_00218"/>
    </source>
</evidence>
<feature type="chain" id="PRO_1000024003" description="Uroporphyrinogen decarboxylase">
    <location>
        <begin position="1"/>
        <end position="355"/>
    </location>
</feature>
<feature type="binding site" evidence="1">
    <location>
        <begin position="27"/>
        <end position="31"/>
    </location>
    <ligand>
        <name>substrate</name>
    </ligand>
</feature>
<feature type="binding site" evidence="1">
    <location>
        <position position="77"/>
    </location>
    <ligand>
        <name>substrate</name>
    </ligand>
</feature>
<feature type="binding site" evidence="1">
    <location>
        <position position="154"/>
    </location>
    <ligand>
        <name>substrate</name>
    </ligand>
</feature>
<feature type="binding site" evidence="1">
    <location>
        <position position="209"/>
    </location>
    <ligand>
        <name>substrate</name>
    </ligand>
</feature>
<feature type="binding site" evidence="1">
    <location>
        <position position="327"/>
    </location>
    <ligand>
        <name>substrate</name>
    </ligand>
</feature>
<feature type="site" description="Transition state stabilizer" evidence="1">
    <location>
        <position position="77"/>
    </location>
</feature>
<protein>
    <recommendedName>
        <fullName evidence="1">Uroporphyrinogen decarboxylase</fullName>
        <shortName evidence="1">UPD</shortName>
        <shortName evidence="1">URO-D</shortName>
        <ecNumber evidence="1">4.1.1.37</ecNumber>
    </recommendedName>
</protein>
<keyword id="KW-0963">Cytoplasm</keyword>
<keyword id="KW-0210">Decarboxylase</keyword>
<keyword id="KW-0456">Lyase</keyword>
<keyword id="KW-0627">Porphyrin biosynthesis</keyword>
<sequence length="355" mass="39268">MNELKNDRYLRALLRQPVDMTPVWMMRQAGRYLPEYKATRAIAGDFMSLCKNAELACEVTMQPLRRYPLDAAILFSDILTIPDAMGLGLYFETGEGPRFQSPITCRADVEKLPIPDPEQELGYVMNAVRTIRRELAGSVPLIGFSGSPWTLATYMVEGGSSKAFTKLKKMMYAEPQTLHLLLDKLADSVILYLNAQIKAGAQSVMIFDTWGGVLTGRDYHEFSLNYMHKIVDGLIRENEGRRVPVTLFTKGGGPWLEAMAATGCDALGLDWTTDIADARRRVGDKVALQGNMDPSVLYAPPARIEQEVSTILASFGQGEGHVFNLGHGIHQDVPPAHAGAFVNAVHALSRPYHQK</sequence>
<name>DCUP_YERPA</name>
<dbReference type="EC" id="4.1.1.37" evidence="1"/>
<dbReference type="EMBL" id="CP000308">
    <property type="protein sequence ID" value="ABG15569.1"/>
    <property type="molecule type" value="Genomic_DNA"/>
</dbReference>
<dbReference type="RefSeq" id="WP_002210686.1">
    <property type="nucleotide sequence ID" value="NZ_CP009906.1"/>
</dbReference>
<dbReference type="SMR" id="Q1C1V3"/>
<dbReference type="GeneID" id="57974983"/>
<dbReference type="KEGG" id="ypa:YPA_3607"/>
<dbReference type="UniPathway" id="UPA00251">
    <property type="reaction ID" value="UER00321"/>
</dbReference>
<dbReference type="Proteomes" id="UP000001971">
    <property type="component" value="Chromosome"/>
</dbReference>
<dbReference type="GO" id="GO:0005829">
    <property type="term" value="C:cytosol"/>
    <property type="evidence" value="ECO:0007669"/>
    <property type="project" value="TreeGrafter"/>
</dbReference>
<dbReference type="GO" id="GO:0004853">
    <property type="term" value="F:uroporphyrinogen decarboxylase activity"/>
    <property type="evidence" value="ECO:0007669"/>
    <property type="project" value="UniProtKB-UniRule"/>
</dbReference>
<dbReference type="GO" id="GO:0019353">
    <property type="term" value="P:protoporphyrinogen IX biosynthetic process from glutamate"/>
    <property type="evidence" value="ECO:0007669"/>
    <property type="project" value="TreeGrafter"/>
</dbReference>
<dbReference type="CDD" id="cd00717">
    <property type="entry name" value="URO-D"/>
    <property type="match status" value="1"/>
</dbReference>
<dbReference type="FunFam" id="3.20.20.210:FF:000001">
    <property type="entry name" value="Uroporphyrinogen decarboxylase"/>
    <property type="match status" value="1"/>
</dbReference>
<dbReference type="Gene3D" id="3.20.20.210">
    <property type="match status" value="1"/>
</dbReference>
<dbReference type="HAMAP" id="MF_00218">
    <property type="entry name" value="URO_D"/>
    <property type="match status" value="1"/>
</dbReference>
<dbReference type="InterPro" id="IPR038071">
    <property type="entry name" value="UROD/MetE-like_sf"/>
</dbReference>
<dbReference type="InterPro" id="IPR006361">
    <property type="entry name" value="Uroporphyrinogen_deCO2ase_HemE"/>
</dbReference>
<dbReference type="InterPro" id="IPR000257">
    <property type="entry name" value="Uroporphyrinogen_deCOase"/>
</dbReference>
<dbReference type="NCBIfam" id="TIGR01464">
    <property type="entry name" value="hemE"/>
    <property type="match status" value="1"/>
</dbReference>
<dbReference type="PANTHER" id="PTHR21091">
    <property type="entry name" value="METHYLTETRAHYDROFOLATE:HOMOCYSTEINE METHYLTRANSFERASE RELATED"/>
    <property type="match status" value="1"/>
</dbReference>
<dbReference type="PANTHER" id="PTHR21091:SF169">
    <property type="entry name" value="UROPORPHYRINOGEN DECARBOXYLASE"/>
    <property type="match status" value="1"/>
</dbReference>
<dbReference type="Pfam" id="PF01208">
    <property type="entry name" value="URO-D"/>
    <property type="match status" value="1"/>
</dbReference>
<dbReference type="SUPFAM" id="SSF51726">
    <property type="entry name" value="UROD/MetE-like"/>
    <property type="match status" value="1"/>
</dbReference>
<dbReference type="PROSITE" id="PS00906">
    <property type="entry name" value="UROD_1"/>
    <property type="match status" value="1"/>
</dbReference>
<dbReference type="PROSITE" id="PS00907">
    <property type="entry name" value="UROD_2"/>
    <property type="match status" value="1"/>
</dbReference>
<reference key="1">
    <citation type="journal article" date="2006" name="J. Bacteriol.">
        <title>Complete genome sequence of Yersinia pestis strains Antiqua and Nepal516: evidence of gene reduction in an emerging pathogen.</title>
        <authorList>
            <person name="Chain P.S.G."/>
            <person name="Hu P."/>
            <person name="Malfatti S.A."/>
            <person name="Radnedge L."/>
            <person name="Larimer F."/>
            <person name="Vergez L.M."/>
            <person name="Worsham P."/>
            <person name="Chu M.C."/>
            <person name="Andersen G.L."/>
        </authorList>
    </citation>
    <scope>NUCLEOTIDE SEQUENCE [LARGE SCALE GENOMIC DNA]</scope>
    <source>
        <strain>Antiqua</strain>
    </source>
</reference>
<organism>
    <name type="scientific">Yersinia pestis bv. Antiqua (strain Antiqua)</name>
    <dbReference type="NCBI Taxonomy" id="360102"/>
    <lineage>
        <taxon>Bacteria</taxon>
        <taxon>Pseudomonadati</taxon>
        <taxon>Pseudomonadota</taxon>
        <taxon>Gammaproteobacteria</taxon>
        <taxon>Enterobacterales</taxon>
        <taxon>Yersiniaceae</taxon>
        <taxon>Yersinia</taxon>
    </lineage>
</organism>
<proteinExistence type="inferred from homology"/>
<comment type="function">
    <text evidence="1">Catalyzes the decarboxylation of four acetate groups of uroporphyrinogen-III to yield coproporphyrinogen-III.</text>
</comment>
<comment type="catalytic activity">
    <reaction evidence="1">
        <text>uroporphyrinogen III + 4 H(+) = coproporphyrinogen III + 4 CO2</text>
        <dbReference type="Rhea" id="RHEA:19865"/>
        <dbReference type="ChEBI" id="CHEBI:15378"/>
        <dbReference type="ChEBI" id="CHEBI:16526"/>
        <dbReference type="ChEBI" id="CHEBI:57308"/>
        <dbReference type="ChEBI" id="CHEBI:57309"/>
        <dbReference type="EC" id="4.1.1.37"/>
    </reaction>
</comment>
<comment type="pathway">
    <text evidence="1">Porphyrin-containing compound metabolism; protoporphyrin-IX biosynthesis; coproporphyrinogen-III from 5-aminolevulinate: step 4/4.</text>
</comment>
<comment type="subunit">
    <text evidence="1">Homodimer.</text>
</comment>
<comment type="subcellular location">
    <subcellularLocation>
        <location evidence="1">Cytoplasm</location>
    </subcellularLocation>
</comment>
<comment type="similarity">
    <text evidence="1">Belongs to the uroporphyrinogen decarboxylase family.</text>
</comment>
<gene>
    <name evidence="1" type="primary">hemE</name>
    <name type="ordered locus">YPA_3607</name>
</gene>